<comment type="function">
    <text evidence="1">One of the primary rRNA binding proteins, this protein initially binds near the 5'-end of the 23S rRNA. It is important during the early stages of 50S assembly. It makes multiple contacts with different domains of the 23S rRNA in the assembled 50S subunit and ribosome.</text>
</comment>
<comment type="function">
    <text evidence="1">Forms part of the polypeptide exit tunnel.</text>
</comment>
<comment type="subunit">
    <text evidence="1">Part of the 50S ribosomal subunit.</text>
</comment>
<comment type="similarity">
    <text evidence="1">Belongs to the universal ribosomal protein uL4 family.</text>
</comment>
<sequence length="202" mass="23218">MELVLRDDEHSVLNVSDITFGRDFNEALVHQVIISYSSSIRQGTHAQKNRSEVSGSGKKPWRQKGTGRARVGSLRSPLWRSGGVTFAAKPKSFYQKINKKMYRGALKSIFSELIRQKRLVVFREFTIEFPKTRLLIDKLRDIKLHDVLIITKTKDNNLKLASRNLYKVDVQTVNHMNPRSLISFNHVLITSKAIQKVEELLT</sequence>
<keyword id="KW-1185">Reference proteome</keyword>
<keyword id="KW-0687">Ribonucleoprotein</keyword>
<keyword id="KW-0689">Ribosomal protein</keyword>
<keyword id="KW-0694">RNA-binding</keyword>
<keyword id="KW-0699">rRNA-binding</keyword>
<name>RL4_BUCBP</name>
<reference key="1">
    <citation type="journal article" date="2003" name="Proc. Natl. Acad. Sci. U.S.A.">
        <title>Reductive genome evolution in Buchnera aphidicola.</title>
        <authorList>
            <person name="van Ham R.C.H.J."/>
            <person name="Kamerbeek J."/>
            <person name="Palacios C."/>
            <person name="Rausell C."/>
            <person name="Abascal F."/>
            <person name="Bastolla U."/>
            <person name="Fernandez J.M."/>
            <person name="Jimenez L."/>
            <person name="Postigo M."/>
            <person name="Silva F.J."/>
            <person name="Tamames J."/>
            <person name="Viguera E."/>
            <person name="Latorre A."/>
            <person name="Valencia A."/>
            <person name="Moran F."/>
            <person name="Moya A."/>
        </authorList>
    </citation>
    <scope>NUCLEOTIDE SEQUENCE [LARGE SCALE GENOMIC DNA]</scope>
    <source>
        <strain>Bp</strain>
    </source>
</reference>
<gene>
    <name evidence="1" type="primary">rplD</name>
    <name type="ordered locus">bbp_466</name>
</gene>
<organism>
    <name type="scientific">Buchnera aphidicola subsp. Baizongia pistaciae (strain Bp)</name>
    <dbReference type="NCBI Taxonomy" id="224915"/>
    <lineage>
        <taxon>Bacteria</taxon>
        <taxon>Pseudomonadati</taxon>
        <taxon>Pseudomonadota</taxon>
        <taxon>Gammaproteobacteria</taxon>
        <taxon>Enterobacterales</taxon>
        <taxon>Erwiniaceae</taxon>
        <taxon>Buchnera</taxon>
    </lineage>
</organism>
<protein>
    <recommendedName>
        <fullName evidence="1">Large ribosomal subunit protein uL4</fullName>
    </recommendedName>
    <alternativeName>
        <fullName evidence="3">50S ribosomal protein L4</fullName>
    </alternativeName>
</protein>
<proteinExistence type="inferred from homology"/>
<feature type="chain" id="PRO_0000129197" description="Large ribosomal subunit protein uL4">
    <location>
        <begin position="1"/>
        <end position="202"/>
    </location>
</feature>
<feature type="region of interest" description="Disordered" evidence="2">
    <location>
        <begin position="45"/>
        <end position="71"/>
    </location>
</feature>
<dbReference type="EMBL" id="AE016826">
    <property type="protein sequence ID" value="AAO27172.1"/>
    <property type="molecule type" value="Genomic_DNA"/>
</dbReference>
<dbReference type="RefSeq" id="WP_011091573.1">
    <property type="nucleotide sequence ID" value="NC_004545.1"/>
</dbReference>
<dbReference type="SMR" id="Q89A69"/>
<dbReference type="STRING" id="224915.bbp_466"/>
<dbReference type="KEGG" id="bab:bbp_466"/>
<dbReference type="eggNOG" id="COG0088">
    <property type="taxonomic scope" value="Bacteria"/>
</dbReference>
<dbReference type="HOGENOM" id="CLU_041575_5_2_6"/>
<dbReference type="OrthoDB" id="9803201at2"/>
<dbReference type="Proteomes" id="UP000000601">
    <property type="component" value="Chromosome"/>
</dbReference>
<dbReference type="GO" id="GO:1990904">
    <property type="term" value="C:ribonucleoprotein complex"/>
    <property type="evidence" value="ECO:0007669"/>
    <property type="project" value="UniProtKB-KW"/>
</dbReference>
<dbReference type="GO" id="GO:0005840">
    <property type="term" value="C:ribosome"/>
    <property type="evidence" value="ECO:0007669"/>
    <property type="project" value="UniProtKB-KW"/>
</dbReference>
<dbReference type="GO" id="GO:0019843">
    <property type="term" value="F:rRNA binding"/>
    <property type="evidence" value="ECO:0007669"/>
    <property type="project" value="UniProtKB-UniRule"/>
</dbReference>
<dbReference type="GO" id="GO:0003735">
    <property type="term" value="F:structural constituent of ribosome"/>
    <property type="evidence" value="ECO:0007669"/>
    <property type="project" value="InterPro"/>
</dbReference>
<dbReference type="GO" id="GO:0006412">
    <property type="term" value="P:translation"/>
    <property type="evidence" value="ECO:0007669"/>
    <property type="project" value="UniProtKB-UniRule"/>
</dbReference>
<dbReference type="Gene3D" id="3.40.1370.10">
    <property type="match status" value="1"/>
</dbReference>
<dbReference type="HAMAP" id="MF_01328_B">
    <property type="entry name" value="Ribosomal_uL4_B"/>
    <property type="match status" value="1"/>
</dbReference>
<dbReference type="InterPro" id="IPR002136">
    <property type="entry name" value="Ribosomal_uL4"/>
</dbReference>
<dbReference type="InterPro" id="IPR013005">
    <property type="entry name" value="Ribosomal_uL4-like"/>
</dbReference>
<dbReference type="InterPro" id="IPR023574">
    <property type="entry name" value="Ribosomal_uL4_dom_sf"/>
</dbReference>
<dbReference type="NCBIfam" id="TIGR03953">
    <property type="entry name" value="rplD_bact"/>
    <property type="match status" value="1"/>
</dbReference>
<dbReference type="PANTHER" id="PTHR10746">
    <property type="entry name" value="50S RIBOSOMAL PROTEIN L4"/>
    <property type="match status" value="1"/>
</dbReference>
<dbReference type="PANTHER" id="PTHR10746:SF6">
    <property type="entry name" value="LARGE RIBOSOMAL SUBUNIT PROTEIN UL4M"/>
    <property type="match status" value="1"/>
</dbReference>
<dbReference type="Pfam" id="PF00573">
    <property type="entry name" value="Ribosomal_L4"/>
    <property type="match status" value="1"/>
</dbReference>
<dbReference type="SUPFAM" id="SSF52166">
    <property type="entry name" value="Ribosomal protein L4"/>
    <property type="match status" value="1"/>
</dbReference>
<evidence type="ECO:0000255" key="1">
    <source>
        <dbReference type="HAMAP-Rule" id="MF_01328"/>
    </source>
</evidence>
<evidence type="ECO:0000256" key="2">
    <source>
        <dbReference type="SAM" id="MobiDB-lite"/>
    </source>
</evidence>
<evidence type="ECO:0000305" key="3"/>
<accession>Q89A69</accession>